<protein>
    <recommendedName>
        <fullName evidence="1 4">Ribosome biogenesis GTPase A</fullName>
    </recommendedName>
</protein>
<keyword id="KW-0963">Cytoplasm</keyword>
<keyword id="KW-0342">GTP-binding</keyword>
<keyword id="KW-0378">Hydrolase</keyword>
<keyword id="KW-0547">Nucleotide-binding</keyword>
<keyword id="KW-0690">Ribosome biogenesis</keyword>
<keyword id="KW-0694">RNA-binding</keyword>
<accession>E0TTS5</accession>
<feature type="chain" id="PRO_0000409882" description="Ribosome biogenesis GTPase A">
    <location>
        <begin position="1"/>
        <end position="282"/>
    </location>
</feature>
<feature type="domain" description="CP-type G" evidence="2">
    <location>
        <begin position="14"/>
        <end position="178"/>
    </location>
</feature>
<feature type="binding site" evidence="1">
    <location>
        <begin position="58"/>
        <end position="61"/>
    </location>
    <ligand>
        <name>GTP</name>
        <dbReference type="ChEBI" id="CHEBI:37565"/>
    </ligand>
</feature>
<feature type="binding site" evidence="1">
    <location>
        <begin position="86"/>
        <end position="87"/>
    </location>
    <ligand>
        <name>GTP</name>
        <dbReference type="ChEBI" id="CHEBI:37565"/>
    </ligand>
</feature>
<feature type="binding site" evidence="1">
    <location>
        <begin position="130"/>
        <end position="135"/>
    </location>
    <ligand>
        <name>GTP</name>
        <dbReference type="ChEBI" id="CHEBI:37565"/>
    </ligand>
</feature>
<feature type="binding site" evidence="1">
    <location>
        <position position="174"/>
    </location>
    <ligand>
        <name>GTP</name>
        <dbReference type="ChEBI" id="CHEBI:37565"/>
    </ligand>
</feature>
<reference key="1">
    <citation type="journal article" date="2011" name="Microbiology">
        <title>The genome sequence of Bacillus subtilis subsp. spizizenii W23: insights into speciation within the B. subtilis complex and into the history of B. subtilis genetics.</title>
        <authorList>
            <person name="Zeigler D.R."/>
        </authorList>
    </citation>
    <scope>NUCLEOTIDE SEQUENCE [LARGE SCALE GENOMIC DNA]</scope>
    <source>
        <strain>ATCC 23059 / NRRL B-14472 / W23</strain>
    </source>
</reference>
<comment type="function">
    <text evidence="1">Essential protein that is required for a late step of 50S ribosomal subunit assembly. Has GTPase activity that is stimulated by interaction with the immature 50S ribosome subunit. Binds to the 23S rRNA. Required for the association of ribosomal proteins rplP and rpmA with the large subunit (By similarity).</text>
</comment>
<comment type="subunit">
    <text evidence="1">Interacts with ctc. Interacts with the immature 50S ribosome subunit. 2 molecules of rbgA bind to one 50S subunit (By similarity).</text>
</comment>
<comment type="subcellular location">
    <subcellularLocation>
        <location evidence="1 3">Cytoplasm</location>
    </subcellularLocation>
</comment>
<comment type="similarity">
    <text evidence="2">Belongs to the TRAFAC class YlqF/YawG GTPase family. MTG1 subfamily.</text>
</comment>
<gene>
    <name type="primary">rbgA</name>
    <name evidence="1" type="synonym">ylqF</name>
    <name type="ordered locus">BSUW23_08265</name>
</gene>
<proteinExistence type="inferred from homology"/>
<sequence length="282" mass="32000">MTIQWFPGHMAKARREVTEKLKLIDIVYELVDARIPMSSRNPMIEDILKNKPRIMLLNKADKADAAVTQQWKEHFENQGIRSLSINSVNGQGLNQIVPASKEILQEKFDRMRAKGVKPRAIRALIIGIPNVGKSTLINRLAKKNIAKTGDRPGITTSQQWVKVGKELELLDTPGILWPKFEDELVGLRLAVTGAIKDSIINLQDVAVFGLRFLEEHYPERLKERYALDEIPEDIAELFDAIGEKRGCLMSGGLINYDKTTEVIIRDIRTEKFGRLSFEQPTM</sequence>
<evidence type="ECO:0000250" key="1">
    <source>
        <dbReference type="UniProtKB" id="O31743"/>
    </source>
</evidence>
<evidence type="ECO:0000255" key="2">
    <source>
        <dbReference type="PROSITE-ProRule" id="PRU01058"/>
    </source>
</evidence>
<evidence type="ECO:0000305" key="3"/>
<evidence type="ECO:0000312" key="4">
    <source>
        <dbReference type="EMBL" id="ADM37701.1"/>
    </source>
</evidence>
<organism>
    <name type="scientific">Bacillus spizizenii (strain ATCC 23059 / NRRL B-14472 / W23)</name>
    <name type="common">Bacillus subtilis subsp. spizizenii</name>
    <dbReference type="NCBI Taxonomy" id="655816"/>
    <lineage>
        <taxon>Bacteria</taxon>
        <taxon>Bacillati</taxon>
        <taxon>Bacillota</taxon>
        <taxon>Bacilli</taxon>
        <taxon>Bacillales</taxon>
        <taxon>Bacillaceae</taxon>
        <taxon>Bacillus</taxon>
    </lineage>
</organism>
<dbReference type="EMBL" id="CP002183">
    <property type="protein sequence ID" value="ADM37701.1"/>
    <property type="molecule type" value="Genomic_DNA"/>
</dbReference>
<dbReference type="RefSeq" id="WP_003220827.1">
    <property type="nucleotide sequence ID" value="NZ_CP148102.1"/>
</dbReference>
<dbReference type="SMR" id="E0TTS5"/>
<dbReference type="KEGG" id="bss:BSUW23_08265"/>
<dbReference type="HOGENOM" id="CLU_011106_1_0_9"/>
<dbReference type="Proteomes" id="UP000002233">
    <property type="component" value="Chromosome"/>
</dbReference>
<dbReference type="GO" id="GO:0005737">
    <property type="term" value="C:cytoplasm"/>
    <property type="evidence" value="ECO:0007669"/>
    <property type="project" value="UniProtKB-SubCell"/>
</dbReference>
<dbReference type="GO" id="GO:0005525">
    <property type="term" value="F:GTP binding"/>
    <property type="evidence" value="ECO:0007669"/>
    <property type="project" value="UniProtKB-KW"/>
</dbReference>
<dbReference type="GO" id="GO:0003924">
    <property type="term" value="F:GTPase activity"/>
    <property type="evidence" value="ECO:0007669"/>
    <property type="project" value="TreeGrafter"/>
</dbReference>
<dbReference type="GO" id="GO:0003723">
    <property type="term" value="F:RNA binding"/>
    <property type="evidence" value="ECO:0007669"/>
    <property type="project" value="UniProtKB-KW"/>
</dbReference>
<dbReference type="GO" id="GO:0042254">
    <property type="term" value="P:ribosome biogenesis"/>
    <property type="evidence" value="ECO:0007669"/>
    <property type="project" value="UniProtKB-KW"/>
</dbReference>
<dbReference type="GO" id="GO:0006412">
    <property type="term" value="P:translation"/>
    <property type="evidence" value="ECO:0007669"/>
    <property type="project" value="TreeGrafter"/>
</dbReference>
<dbReference type="CDD" id="cd00882">
    <property type="entry name" value="Ras_like_GTPase"/>
    <property type="match status" value="1"/>
</dbReference>
<dbReference type="CDD" id="cd01856">
    <property type="entry name" value="YlqF"/>
    <property type="match status" value="1"/>
</dbReference>
<dbReference type="FunFam" id="1.10.1580.10:FF:000003">
    <property type="entry name" value="Ribosome biogenesis GTPase A"/>
    <property type="match status" value="1"/>
</dbReference>
<dbReference type="FunFam" id="3.40.50.300:FF:000590">
    <property type="entry name" value="Ribosome biogenesis GTPase A"/>
    <property type="match status" value="1"/>
</dbReference>
<dbReference type="Gene3D" id="1.10.1580.10">
    <property type="match status" value="1"/>
</dbReference>
<dbReference type="Gene3D" id="3.40.50.300">
    <property type="entry name" value="P-loop containing nucleotide triphosphate hydrolases"/>
    <property type="match status" value="1"/>
</dbReference>
<dbReference type="InterPro" id="IPR030378">
    <property type="entry name" value="G_CP_dom"/>
</dbReference>
<dbReference type="InterPro" id="IPR006073">
    <property type="entry name" value="GTP-bd"/>
</dbReference>
<dbReference type="InterPro" id="IPR023179">
    <property type="entry name" value="GTP-bd_ortho_bundle_sf"/>
</dbReference>
<dbReference type="InterPro" id="IPR019991">
    <property type="entry name" value="GTP-bd_ribosome_bgen"/>
</dbReference>
<dbReference type="InterPro" id="IPR016478">
    <property type="entry name" value="GTPase_MTG1"/>
</dbReference>
<dbReference type="InterPro" id="IPR027417">
    <property type="entry name" value="P-loop_NTPase"/>
</dbReference>
<dbReference type="NCBIfam" id="TIGR03596">
    <property type="entry name" value="GTPase_YlqF"/>
    <property type="match status" value="1"/>
</dbReference>
<dbReference type="PANTHER" id="PTHR45782">
    <property type="entry name" value="MITOCHONDRIAL RIBOSOME-ASSOCIATED GTPASE 1"/>
    <property type="match status" value="1"/>
</dbReference>
<dbReference type="PANTHER" id="PTHR45782:SF4">
    <property type="entry name" value="MITOCHONDRIAL RIBOSOME-ASSOCIATED GTPASE 1"/>
    <property type="match status" value="1"/>
</dbReference>
<dbReference type="Pfam" id="PF01926">
    <property type="entry name" value="MMR_HSR1"/>
    <property type="match status" value="1"/>
</dbReference>
<dbReference type="PIRSF" id="PIRSF006230">
    <property type="entry name" value="MG442"/>
    <property type="match status" value="1"/>
</dbReference>
<dbReference type="SUPFAM" id="SSF52540">
    <property type="entry name" value="P-loop containing nucleoside triphosphate hydrolases"/>
    <property type="match status" value="1"/>
</dbReference>
<dbReference type="PROSITE" id="PS51721">
    <property type="entry name" value="G_CP"/>
    <property type="match status" value="1"/>
</dbReference>
<name>RBGA_BACSH</name>